<feature type="chain" id="PRO_0000406009" description="Putative uncharacterized protein YHR054W-A">
    <location>
        <begin position="1"/>
        <end position="64"/>
    </location>
</feature>
<feature type="transmembrane region" description="Helical" evidence="1">
    <location>
        <begin position="33"/>
        <end position="55"/>
    </location>
</feature>
<sequence length="64" mass="7517">MNILKTIRFISQSSMTSWFLQTCYRRGICRRCYTPLGSYMIFGIVHYFCSYHIGIGTHDLHFGS</sequence>
<proteinExistence type="uncertain"/>
<reference key="1">
    <citation type="journal article" date="1994" name="Science">
        <title>Complete nucleotide sequence of Saccharomyces cerevisiae chromosome VIII.</title>
        <authorList>
            <person name="Johnston M."/>
            <person name="Andrews S."/>
            <person name="Brinkman R."/>
            <person name="Cooper J."/>
            <person name="Ding H."/>
            <person name="Dover J."/>
            <person name="Du Z."/>
            <person name="Favello A."/>
            <person name="Fulton L."/>
            <person name="Gattung S."/>
            <person name="Geisel C."/>
            <person name="Kirsten J."/>
            <person name="Kucaba T."/>
            <person name="Hillier L.W."/>
            <person name="Jier M."/>
            <person name="Johnston L."/>
            <person name="Langston Y."/>
            <person name="Latreille P."/>
            <person name="Louis E.J."/>
            <person name="Macri C."/>
            <person name="Mardis E."/>
            <person name="Menezes S."/>
            <person name="Mouser L."/>
            <person name="Nhan M."/>
            <person name="Rifkin L."/>
            <person name="Riles L."/>
            <person name="St Peter H."/>
            <person name="Trevaskis E."/>
            <person name="Vaughan K."/>
            <person name="Vignati D."/>
            <person name="Wilcox L."/>
            <person name="Wohldman P."/>
            <person name="Waterston R."/>
            <person name="Wilson R."/>
            <person name="Vaudin M."/>
        </authorList>
    </citation>
    <scope>NUCLEOTIDE SEQUENCE [LARGE SCALE GENOMIC DNA]</scope>
    <source>
        <strain>ATCC 204508 / S288c</strain>
    </source>
</reference>
<reference key="2">
    <citation type="journal article" date="2014" name="G3 (Bethesda)">
        <title>The reference genome sequence of Saccharomyces cerevisiae: Then and now.</title>
        <authorList>
            <person name="Engel S.R."/>
            <person name="Dietrich F.S."/>
            <person name="Fisk D.G."/>
            <person name="Binkley G."/>
            <person name="Balakrishnan R."/>
            <person name="Costanzo M.C."/>
            <person name="Dwight S.S."/>
            <person name="Hitz B.C."/>
            <person name="Karra K."/>
            <person name="Nash R.S."/>
            <person name="Weng S."/>
            <person name="Wong E.D."/>
            <person name="Lloyd P."/>
            <person name="Skrzypek M.S."/>
            <person name="Miyasato S.R."/>
            <person name="Simison M."/>
            <person name="Cherry J.M."/>
        </authorList>
    </citation>
    <scope>GENOME REANNOTATION</scope>
    <source>
        <strain>ATCC 204508 / S288c</strain>
    </source>
</reference>
<reference key="3">
    <citation type="journal article" date="2002" name="Nat. Biotechnol.">
        <title>An integrated approach for finding overlooked genes in yeast.</title>
        <authorList>
            <person name="Kumar A."/>
            <person name="Harrison P.M."/>
            <person name="Cheung K.-H."/>
            <person name="Lan N."/>
            <person name="Echols N."/>
            <person name="Bertone P."/>
            <person name="Miller P."/>
            <person name="Gerstein M.B."/>
            <person name="Snyder M."/>
        </authorList>
    </citation>
    <scope>NUCLEOTIDE SEQUENCE [GENOMIC DNA]</scope>
</reference>
<keyword id="KW-0472">Membrane</keyword>
<keyword id="KW-0812">Transmembrane</keyword>
<keyword id="KW-1133">Transmembrane helix</keyword>
<evidence type="ECO:0000255" key="1"/>
<evidence type="ECO:0000305" key="2"/>
<evidence type="ECO:0000305" key="3">
    <source>
    </source>
</evidence>
<comment type="subcellular location">
    <subcellularLocation>
        <location evidence="2">Membrane</location>
        <topology evidence="2">Single-pass membrane protein</topology>
    </subcellularLocation>
</comment>
<comment type="miscellaneous">
    <text evidence="2">Partially overlaps CUP1-2.</text>
</comment>
<comment type="caution">
    <text evidence="3">Product of a dubious gene prediction unlikely to encode a functional protein. Because of that it is not part of the S.cerevisiae S288c complete/reference proteome set.</text>
</comment>
<organism>
    <name type="scientific">Saccharomyces cerevisiae (strain ATCC 204508 / S288c)</name>
    <name type="common">Baker's yeast</name>
    <dbReference type="NCBI Taxonomy" id="559292"/>
    <lineage>
        <taxon>Eukaryota</taxon>
        <taxon>Fungi</taxon>
        <taxon>Dikarya</taxon>
        <taxon>Ascomycota</taxon>
        <taxon>Saccharomycotina</taxon>
        <taxon>Saccharomycetes</taxon>
        <taxon>Saccharomycetales</taxon>
        <taxon>Saccharomycetaceae</taxon>
        <taxon>Saccharomyces</taxon>
    </lineage>
</organism>
<name>YH054_YEAST</name>
<accession>P0CL33</accession>
<accession>Q8TF97</accession>
<gene>
    <name type="ordered locus">YHR054W-A</name>
</gene>
<dbReference type="EMBL" id="U00061">
    <property type="status" value="NOT_ANNOTATED_CDS"/>
    <property type="molecule type" value="Genomic_DNA"/>
</dbReference>
<dbReference type="EMBL" id="AF479926">
    <property type="protein sequence ID" value="AAL79239.1"/>
    <property type="molecule type" value="Genomic_DNA"/>
</dbReference>
<dbReference type="EnsemblFungi" id="YHR052W-A_mRNA">
    <property type="protein sequence ID" value="YHR052W-A"/>
    <property type="gene ID" value="YHR052W-A"/>
</dbReference>
<dbReference type="EnsemblFungi" id="YHR054W-A_mRNA">
    <property type="protein sequence ID" value="YHR054W-A"/>
    <property type="gene ID" value="YHR054W-A"/>
</dbReference>
<dbReference type="AGR" id="SGD:S000028648"/>
<dbReference type="SGD" id="S000028648">
    <property type="gene designation" value="YHR054W-A"/>
</dbReference>
<dbReference type="GeneTree" id="ENSGT00940000181349"/>
<dbReference type="HOGENOM" id="CLU_2868877_0_0_1"/>
<dbReference type="GO" id="GO:0016020">
    <property type="term" value="C:membrane"/>
    <property type="evidence" value="ECO:0007669"/>
    <property type="project" value="UniProtKB-SubCell"/>
</dbReference>
<protein>
    <recommendedName>
        <fullName>Putative uncharacterized protein YHR054W-A</fullName>
    </recommendedName>
</protein>